<gene>
    <name evidence="1" type="primary">atpC</name>
    <name type="ordered locus">Clos_2559</name>
</gene>
<evidence type="ECO:0000255" key="1">
    <source>
        <dbReference type="HAMAP-Rule" id="MF_00530"/>
    </source>
</evidence>
<comment type="function">
    <text evidence="1">Produces ATP from ADP in the presence of a proton gradient across the membrane.</text>
</comment>
<comment type="subunit">
    <text evidence="1">F-type ATPases have 2 components, CF(1) - the catalytic core - and CF(0) - the membrane proton channel. CF(1) has five subunits: alpha(3), beta(3), gamma(1), delta(1), epsilon(1). CF(0) has three main subunits: a, b and c.</text>
</comment>
<comment type="subcellular location">
    <subcellularLocation>
        <location evidence="1">Cell membrane</location>
        <topology evidence="1">Peripheral membrane protein</topology>
    </subcellularLocation>
</comment>
<comment type="similarity">
    <text evidence="1">Belongs to the ATPase epsilon chain family.</text>
</comment>
<keyword id="KW-0066">ATP synthesis</keyword>
<keyword id="KW-1003">Cell membrane</keyword>
<keyword id="KW-0139">CF(1)</keyword>
<keyword id="KW-0375">Hydrogen ion transport</keyword>
<keyword id="KW-0406">Ion transport</keyword>
<keyword id="KW-0472">Membrane</keyword>
<keyword id="KW-1185">Reference proteome</keyword>
<keyword id="KW-0813">Transport</keyword>
<protein>
    <recommendedName>
        <fullName evidence="1">ATP synthase epsilon chain</fullName>
    </recommendedName>
    <alternativeName>
        <fullName evidence="1">ATP synthase F1 sector epsilon subunit</fullName>
    </alternativeName>
    <alternativeName>
        <fullName evidence="1">F-ATPase epsilon subunit</fullName>
    </alternativeName>
</protein>
<sequence length="134" mass="15155">MASTFRLQIVTPSRTFYDDEVEMAIVRSTEGDLGIMSNHMLMVAPLKIGKVRIKKDGQFREAAISEGFVQVESEYTRIITDTAEWPEEIDVQRAEEAKERAEKRLSASQGEIDRLRAEIALKRALNRLSVANGK</sequence>
<accession>A8MJV8</accession>
<feature type="chain" id="PRO_1000060975" description="ATP synthase epsilon chain">
    <location>
        <begin position="1"/>
        <end position="134"/>
    </location>
</feature>
<dbReference type="EMBL" id="CP000853">
    <property type="protein sequence ID" value="ABW20090.1"/>
    <property type="molecule type" value="Genomic_DNA"/>
</dbReference>
<dbReference type="RefSeq" id="WP_012160397.1">
    <property type="nucleotide sequence ID" value="NC_009922.1"/>
</dbReference>
<dbReference type="SMR" id="A8MJV8"/>
<dbReference type="STRING" id="350688.Clos_2559"/>
<dbReference type="KEGG" id="aoe:Clos_2559"/>
<dbReference type="eggNOG" id="COG0355">
    <property type="taxonomic scope" value="Bacteria"/>
</dbReference>
<dbReference type="HOGENOM" id="CLU_084338_1_3_9"/>
<dbReference type="OrthoDB" id="9804110at2"/>
<dbReference type="Proteomes" id="UP000000269">
    <property type="component" value="Chromosome"/>
</dbReference>
<dbReference type="GO" id="GO:0005886">
    <property type="term" value="C:plasma membrane"/>
    <property type="evidence" value="ECO:0007669"/>
    <property type="project" value="UniProtKB-SubCell"/>
</dbReference>
<dbReference type="GO" id="GO:0045259">
    <property type="term" value="C:proton-transporting ATP synthase complex"/>
    <property type="evidence" value="ECO:0007669"/>
    <property type="project" value="UniProtKB-KW"/>
</dbReference>
<dbReference type="GO" id="GO:0005524">
    <property type="term" value="F:ATP binding"/>
    <property type="evidence" value="ECO:0007669"/>
    <property type="project" value="UniProtKB-UniRule"/>
</dbReference>
<dbReference type="GO" id="GO:0046933">
    <property type="term" value="F:proton-transporting ATP synthase activity, rotational mechanism"/>
    <property type="evidence" value="ECO:0007669"/>
    <property type="project" value="UniProtKB-UniRule"/>
</dbReference>
<dbReference type="CDD" id="cd12152">
    <property type="entry name" value="F1-ATPase_delta"/>
    <property type="match status" value="1"/>
</dbReference>
<dbReference type="FunFam" id="1.20.5.440:FF:000001">
    <property type="entry name" value="ATP synthase epsilon chain"/>
    <property type="match status" value="1"/>
</dbReference>
<dbReference type="Gene3D" id="1.20.5.440">
    <property type="entry name" value="ATP synthase delta/epsilon subunit, C-terminal domain"/>
    <property type="match status" value="1"/>
</dbReference>
<dbReference type="Gene3D" id="2.60.15.10">
    <property type="entry name" value="F0F1 ATP synthase delta/epsilon subunit, N-terminal"/>
    <property type="match status" value="1"/>
</dbReference>
<dbReference type="HAMAP" id="MF_00530">
    <property type="entry name" value="ATP_synth_epsil_bac"/>
    <property type="match status" value="1"/>
</dbReference>
<dbReference type="InterPro" id="IPR036794">
    <property type="entry name" value="ATP_F1_dsu/esu_C_sf"/>
</dbReference>
<dbReference type="InterPro" id="IPR001469">
    <property type="entry name" value="ATP_synth_F1_dsu/esu"/>
</dbReference>
<dbReference type="InterPro" id="IPR020546">
    <property type="entry name" value="ATP_synth_F1_dsu/esu_N"/>
</dbReference>
<dbReference type="InterPro" id="IPR020547">
    <property type="entry name" value="ATP_synth_F1_esu_C"/>
</dbReference>
<dbReference type="InterPro" id="IPR036771">
    <property type="entry name" value="ATPsynth_dsu/esu_N"/>
</dbReference>
<dbReference type="NCBIfam" id="TIGR01216">
    <property type="entry name" value="ATP_synt_epsi"/>
    <property type="match status" value="1"/>
</dbReference>
<dbReference type="NCBIfam" id="NF001846">
    <property type="entry name" value="PRK00571.1-3"/>
    <property type="match status" value="1"/>
</dbReference>
<dbReference type="NCBIfam" id="NF009980">
    <property type="entry name" value="PRK13446.1"/>
    <property type="match status" value="1"/>
</dbReference>
<dbReference type="PANTHER" id="PTHR13822">
    <property type="entry name" value="ATP SYNTHASE DELTA/EPSILON CHAIN"/>
    <property type="match status" value="1"/>
</dbReference>
<dbReference type="PANTHER" id="PTHR13822:SF10">
    <property type="entry name" value="ATP SYNTHASE EPSILON CHAIN, CHLOROPLASTIC"/>
    <property type="match status" value="1"/>
</dbReference>
<dbReference type="Pfam" id="PF00401">
    <property type="entry name" value="ATP-synt_DE"/>
    <property type="match status" value="1"/>
</dbReference>
<dbReference type="Pfam" id="PF02823">
    <property type="entry name" value="ATP-synt_DE_N"/>
    <property type="match status" value="1"/>
</dbReference>
<dbReference type="SUPFAM" id="SSF46604">
    <property type="entry name" value="Epsilon subunit of F1F0-ATP synthase C-terminal domain"/>
    <property type="match status" value="1"/>
</dbReference>
<dbReference type="SUPFAM" id="SSF51344">
    <property type="entry name" value="Epsilon subunit of F1F0-ATP synthase N-terminal domain"/>
    <property type="match status" value="1"/>
</dbReference>
<organism>
    <name type="scientific">Alkaliphilus oremlandii (strain OhILAs)</name>
    <name type="common">Clostridium oremlandii (strain OhILAs)</name>
    <dbReference type="NCBI Taxonomy" id="350688"/>
    <lineage>
        <taxon>Bacteria</taxon>
        <taxon>Bacillati</taxon>
        <taxon>Bacillota</taxon>
        <taxon>Clostridia</taxon>
        <taxon>Peptostreptococcales</taxon>
        <taxon>Natronincolaceae</taxon>
        <taxon>Alkaliphilus</taxon>
    </lineage>
</organism>
<name>ATPE_ALKOO</name>
<proteinExistence type="inferred from homology"/>
<reference key="1">
    <citation type="submission" date="2007-10" db="EMBL/GenBank/DDBJ databases">
        <title>Complete genome of Alkaliphilus oremlandii OhILAs.</title>
        <authorList>
            <person name="Copeland A."/>
            <person name="Lucas S."/>
            <person name="Lapidus A."/>
            <person name="Barry K."/>
            <person name="Detter J.C."/>
            <person name="Glavina del Rio T."/>
            <person name="Hammon N."/>
            <person name="Israni S."/>
            <person name="Dalin E."/>
            <person name="Tice H."/>
            <person name="Pitluck S."/>
            <person name="Chain P."/>
            <person name="Malfatti S."/>
            <person name="Shin M."/>
            <person name="Vergez L."/>
            <person name="Schmutz J."/>
            <person name="Larimer F."/>
            <person name="Land M."/>
            <person name="Hauser L."/>
            <person name="Kyrpides N."/>
            <person name="Mikhailova N."/>
            <person name="Stolz J.F."/>
            <person name="Dawson A."/>
            <person name="Fisher E."/>
            <person name="Crable B."/>
            <person name="Perera E."/>
            <person name="Lisak J."/>
            <person name="Ranganathan M."/>
            <person name="Basu P."/>
            <person name="Richardson P."/>
        </authorList>
    </citation>
    <scope>NUCLEOTIDE SEQUENCE [LARGE SCALE GENOMIC DNA]</scope>
    <source>
        <strain>OhILAs</strain>
    </source>
</reference>